<dbReference type="EMBL" id="M33782">
    <property type="protein sequence ID" value="AAA36730.1"/>
    <property type="status" value="ALT_INIT"/>
    <property type="molecule type" value="mRNA"/>
</dbReference>
<dbReference type="EMBL" id="AJ608786">
    <property type="protein sequence ID" value="CAE77681.1"/>
    <property type="status" value="ALT_INIT"/>
    <property type="molecule type" value="mRNA"/>
</dbReference>
<dbReference type="EMBL" id="AL035588">
    <property type="status" value="NOT_ANNOTATED_CDS"/>
    <property type="molecule type" value="Genomic_DNA"/>
</dbReference>
<dbReference type="EMBL" id="BC006225">
    <property type="protein sequence ID" value="AAH06225.2"/>
    <property type="molecule type" value="mRNA"/>
</dbReference>
<dbReference type="EMBL" id="BC032448">
    <property type="protein sequence ID" value="AAH32448.1"/>
    <property type="molecule type" value="mRNA"/>
</dbReference>
<dbReference type="CCDS" id="CCDS4858.1">
    <molecule id="P19484-1"/>
</dbReference>
<dbReference type="CCDS" id="CCDS64424.1">
    <molecule id="P19484-2"/>
</dbReference>
<dbReference type="PIR" id="A35658">
    <property type="entry name" value="A35658"/>
</dbReference>
<dbReference type="RefSeq" id="NP_001161299.2">
    <property type="nucleotide sequence ID" value="NM_001167827.2"/>
</dbReference>
<dbReference type="RefSeq" id="NP_001258872.1">
    <molecule id="P19484-2"/>
    <property type="nucleotide sequence ID" value="NM_001271943.2"/>
</dbReference>
<dbReference type="RefSeq" id="NP_001258873.1">
    <molecule id="P19484-1"/>
    <property type="nucleotide sequence ID" value="NM_001271944.2"/>
</dbReference>
<dbReference type="RefSeq" id="NP_001258874.1">
    <molecule id="P19484-1"/>
    <property type="nucleotide sequence ID" value="NM_001271945.2"/>
</dbReference>
<dbReference type="RefSeq" id="NP_009093.1">
    <molecule id="P19484-1"/>
    <property type="nucleotide sequence ID" value="NM_007162.3"/>
</dbReference>
<dbReference type="RefSeq" id="XP_005249468.1">
    <molecule id="P19484-1"/>
    <property type="nucleotide sequence ID" value="XM_005249411.2"/>
</dbReference>
<dbReference type="RefSeq" id="XP_005249469.1">
    <property type="nucleotide sequence ID" value="XM_005249412.1"/>
</dbReference>
<dbReference type="RefSeq" id="XP_006715275.1">
    <molecule id="P19484-1"/>
    <property type="nucleotide sequence ID" value="XM_006715212.5"/>
</dbReference>
<dbReference type="RefSeq" id="XP_006715276.1">
    <property type="nucleotide sequence ID" value="XM_006715213.2"/>
</dbReference>
<dbReference type="RefSeq" id="XP_011513217.1">
    <property type="nucleotide sequence ID" value="XM_011514915.1"/>
</dbReference>
<dbReference type="RefSeq" id="XP_011513218.1">
    <property type="nucleotide sequence ID" value="XM_011514916.2"/>
</dbReference>
<dbReference type="RefSeq" id="XP_047275317.1">
    <molecule id="P19484-1"/>
    <property type="nucleotide sequence ID" value="XM_047419361.1"/>
</dbReference>
<dbReference type="RefSeq" id="XP_054212396.1">
    <molecule id="P19484-1"/>
    <property type="nucleotide sequence ID" value="XM_054356421.1"/>
</dbReference>
<dbReference type="RefSeq" id="XP_054212397.1">
    <molecule id="P19484-1"/>
    <property type="nucleotide sequence ID" value="XM_054356422.1"/>
</dbReference>
<dbReference type="PDB" id="7UX2">
    <property type="method" value="EM"/>
    <property type="resolution" value="2.90 A"/>
    <property type="chains" value="P=1-476"/>
</dbReference>
<dbReference type="PDB" id="7UXC">
    <property type="method" value="EM"/>
    <property type="resolution" value="3.20 A"/>
    <property type="chains" value="R=1-476"/>
</dbReference>
<dbReference type="PDB" id="7UXH">
    <property type="method" value="EM"/>
    <property type="resolution" value="3.20 A"/>
    <property type="chains" value="T/j=1-476"/>
</dbReference>
<dbReference type="PDB" id="7Y62">
    <property type="method" value="X-ray"/>
    <property type="resolution" value="2.00 A"/>
    <property type="chains" value="A/B=248-319"/>
</dbReference>
<dbReference type="PDBsum" id="7UX2"/>
<dbReference type="PDBsum" id="7UXC"/>
<dbReference type="PDBsum" id="7UXH"/>
<dbReference type="PDBsum" id="7Y62"/>
<dbReference type="EMDB" id="EMD-26846"/>
<dbReference type="EMDB" id="EMD-26857"/>
<dbReference type="EMDB" id="EMD-26861"/>
<dbReference type="SMR" id="P19484"/>
<dbReference type="BioGRID" id="113668">
    <property type="interactions" value="45"/>
</dbReference>
<dbReference type="DIP" id="DIP-61625N"/>
<dbReference type="FunCoup" id="P19484">
    <property type="interactions" value="736"/>
</dbReference>
<dbReference type="IntAct" id="P19484">
    <property type="interactions" value="29"/>
</dbReference>
<dbReference type="MINT" id="P19484"/>
<dbReference type="STRING" id="9606.ENSP00000351742"/>
<dbReference type="GlyGen" id="P19484">
    <property type="glycosylation" value="3 sites, 1 N-linked glycan (1 site), 1 O-linked glycan (1 site)"/>
</dbReference>
<dbReference type="iPTMnet" id="P19484"/>
<dbReference type="PhosphoSitePlus" id="P19484"/>
<dbReference type="BioMuta" id="TFEB"/>
<dbReference type="DMDM" id="19856774"/>
<dbReference type="jPOST" id="P19484"/>
<dbReference type="MassIVE" id="P19484"/>
<dbReference type="PaxDb" id="9606-ENSP00000351742"/>
<dbReference type="PeptideAtlas" id="P19484"/>
<dbReference type="ProteomicsDB" id="53668">
    <molecule id="P19484-1"/>
</dbReference>
<dbReference type="ProteomicsDB" id="53669">
    <molecule id="P19484-2"/>
</dbReference>
<dbReference type="Pumba" id="P19484"/>
<dbReference type="Antibodypedia" id="15889">
    <property type="antibodies" value="614 antibodies from 43 providers"/>
</dbReference>
<dbReference type="DNASU" id="7942"/>
<dbReference type="Ensembl" id="ENST00000230323.8">
    <molecule id="P19484-1"/>
    <property type="protein sequence ID" value="ENSP00000230323.4"/>
    <property type="gene ID" value="ENSG00000112561.19"/>
</dbReference>
<dbReference type="Ensembl" id="ENST00000343317.11">
    <molecule id="P19484-1"/>
    <property type="protein sequence ID" value="ENSP00000343948.7"/>
    <property type="gene ID" value="ENSG00000112561.19"/>
</dbReference>
<dbReference type="Ensembl" id="ENST00000373033.6">
    <molecule id="P19484-1"/>
    <property type="protein sequence ID" value="ENSP00000362124.1"/>
    <property type="gene ID" value="ENSG00000112561.19"/>
</dbReference>
<dbReference type="Ensembl" id="ENST00000403298.9">
    <molecule id="P19484-1"/>
    <property type="protein sequence ID" value="ENSP00000384203.4"/>
    <property type="gene ID" value="ENSG00000112561.19"/>
</dbReference>
<dbReference type="Ensembl" id="ENST00000406563.7">
    <molecule id="P19484-2"/>
    <property type="protein sequence ID" value="ENSP00000383998.3"/>
    <property type="gene ID" value="ENSG00000112561.19"/>
</dbReference>
<dbReference type="Ensembl" id="ENST00000416140.6">
    <molecule id="P19484-1"/>
    <property type="protein sequence ID" value="ENSP00000406491.2"/>
    <property type="gene ID" value="ENSG00000112561.19"/>
</dbReference>
<dbReference type="Ensembl" id="ENST00000419396.6">
    <molecule id="P19484-1"/>
    <property type="protein sequence ID" value="ENSP00000410391.2"/>
    <property type="gene ID" value="ENSG00000112561.19"/>
</dbReference>
<dbReference type="Ensembl" id="ENST00000419574.6">
    <molecule id="P19484-1"/>
    <property type="protein sequence ID" value="ENSP00000400276.2"/>
    <property type="gene ID" value="ENSG00000112561.19"/>
</dbReference>
<dbReference type="Ensembl" id="ENST00000420312.6">
    <molecule id="P19484-1"/>
    <property type="protein sequence ID" value="ENSP00000412551.2"/>
    <property type="gene ID" value="ENSG00000112561.19"/>
</dbReference>
<dbReference type="Ensembl" id="ENST00000424495.2">
    <molecule id="P19484-1"/>
    <property type="protein sequence ID" value="ENSP00000396168.2"/>
    <property type="gene ID" value="ENSG00000112561.19"/>
</dbReference>
<dbReference type="Ensembl" id="ENST00000445214.2">
    <molecule id="P19484-1"/>
    <property type="protein sequence ID" value="ENSP00000393874.2"/>
    <property type="gene ID" value="ENSG00000112561.19"/>
</dbReference>
<dbReference type="Ensembl" id="ENST00000677531.1">
    <molecule id="P19484-1"/>
    <property type="protein sequence ID" value="ENSP00000502927.1"/>
    <property type="gene ID" value="ENSG00000112561.19"/>
</dbReference>
<dbReference type="Ensembl" id="ENST00000678831.1">
    <molecule id="P19484-1"/>
    <property type="protein sequence ID" value="ENSP00000503069.1"/>
    <property type="gene ID" value="ENSG00000112561.19"/>
</dbReference>
<dbReference type="GeneID" id="7942"/>
<dbReference type="KEGG" id="hsa:7942"/>
<dbReference type="MANE-Select" id="ENST00000373033.6">
    <property type="protein sequence ID" value="ENSP00000362124.1"/>
    <property type="RefSeq nucleotide sequence ID" value="NM_001271944.2"/>
    <property type="RefSeq protein sequence ID" value="NP_001258873.1"/>
</dbReference>
<dbReference type="UCSC" id="uc003oqr.3">
    <molecule id="P19484-1"/>
    <property type="organism name" value="human"/>
</dbReference>
<dbReference type="AGR" id="HGNC:11753"/>
<dbReference type="CTD" id="7942"/>
<dbReference type="DisGeNET" id="7942"/>
<dbReference type="GeneCards" id="TFEB"/>
<dbReference type="HGNC" id="HGNC:11753">
    <property type="gene designation" value="TFEB"/>
</dbReference>
<dbReference type="HPA" id="ENSG00000112561">
    <property type="expression patterns" value="Tissue enhanced (skeletal)"/>
</dbReference>
<dbReference type="MalaCards" id="TFEB"/>
<dbReference type="MIM" id="600744">
    <property type="type" value="gene"/>
</dbReference>
<dbReference type="neXtProt" id="NX_P19484"/>
<dbReference type="OpenTargets" id="ENSG00000112561"/>
<dbReference type="Orphanet" id="319308">
    <property type="disease" value="MiT family translocation renal cell carcinoma"/>
</dbReference>
<dbReference type="PharmGKB" id="PA36468"/>
<dbReference type="VEuPathDB" id="HostDB:ENSG00000112561"/>
<dbReference type="eggNOG" id="KOG1318">
    <property type="taxonomic scope" value="Eukaryota"/>
</dbReference>
<dbReference type="GeneTree" id="ENSGT00940000159691"/>
<dbReference type="HOGENOM" id="CLU_031638_3_1_1"/>
<dbReference type="InParanoid" id="P19484"/>
<dbReference type="OMA" id="RPCHAMP"/>
<dbReference type="OrthoDB" id="6242697at2759"/>
<dbReference type="PAN-GO" id="P19484">
    <property type="GO annotations" value="4 GO annotations based on evolutionary models"/>
</dbReference>
<dbReference type="PhylomeDB" id="P19484"/>
<dbReference type="TreeFam" id="TF317174"/>
<dbReference type="PathwayCommons" id="P19484"/>
<dbReference type="Reactome" id="R-HSA-9856649">
    <property type="pathway name" value="Transcriptional and post-translational regulation of MITF-M expression and activity"/>
</dbReference>
<dbReference type="SignaLink" id="P19484"/>
<dbReference type="SIGNOR" id="P19484"/>
<dbReference type="BioGRID-ORCS" id="7942">
    <property type="hits" value="11 hits in 1170 CRISPR screens"/>
</dbReference>
<dbReference type="CD-CODE" id="F9F5AA60">
    <property type="entry name" value="Synthetic Condensate 000278"/>
</dbReference>
<dbReference type="ChiTaRS" id="TFEB">
    <property type="organism name" value="human"/>
</dbReference>
<dbReference type="GeneWiki" id="TFEB"/>
<dbReference type="GenomeRNAi" id="7942"/>
<dbReference type="Pharos" id="P19484">
    <property type="development level" value="Tbio"/>
</dbReference>
<dbReference type="PRO" id="PR:P19484"/>
<dbReference type="Proteomes" id="UP000005640">
    <property type="component" value="Chromosome 6"/>
</dbReference>
<dbReference type="RNAct" id="P19484">
    <property type="molecule type" value="protein"/>
</dbReference>
<dbReference type="Bgee" id="ENSG00000112561">
    <property type="expression patterns" value="Expressed in hindlimb stylopod muscle and 201 other cell types or tissues"/>
</dbReference>
<dbReference type="ExpressionAtlas" id="P19484">
    <property type="expression patterns" value="baseline and differential"/>
</dbReference>
<dbReference type="GO" id="GO:0000785">
    <property type="term" value="C:chromatin"/>
    <property type="evidence" value="ECO:0000247"/>
    <property type="project" value="NTNU_SB"/>
</dbReference>
<dbReference type="GO" id="GO:0005737">
    <property type="term" value="C:cytoplasm"/>
    <property type="evidence" value="ECO:0000314"/>
    <property type="project" value="UniProtKB"/>
</dbReference>
<dbReference type="GO" id="GO:0005829">
    <property type="term" value="C:cytosol"/>
    <property type="evidence" value="ECO:0000314"/>
    <property type="project" value="HPA"/>
</dbReference>
<dbReference type="GO" id="GO:0005765">
    <property type="term" value="C:lysosomal membrane"/>
    <property type="evidence" value="ECO:0000314"/>
    <property type="project" value="UniProtKB"/>
</dbReference>
<dbReference type="GO" id="GO:0005634">
    <property type="term" value="C:nucleus"/>
    <property type="evidence" value="ECO:0000314"/>
    <property type="project" value="UniProtKB"/>
</dbReference>
<dbReference type="GO" id="GO:0005667">
    <property type="term" value="C:transcription regulator complex"/>
    <property type="evidence" value="ECO:0007669"/>
    <property type="project" value="Ensembl"/>
</dbReference>
<dbReference type="GO" id="GO:0001228">
    <property type="term" value="F:DNA-binding transcription activator activity, RNA polymerase II-specific"/>
    <property type="evidence" value="ECO:0007669"/>
    <property type="project" value="Ensembl"/>
</dbReference>
<dbReference type="GO" id="GO:0003700">
    <property type="term" value="F:DNA-binding transcription factor activity"/>
    <property type="evidence" value="ECO:0000314"/>
    <property type="project" value="UniProtKB"/>
</dbReference>
<dbReference type="GO" id="GO:0000981">
    <property type="term" value="F:DNA-binding transcription factor activity, RNA polymerase II-specific"/>
    <property type="evidence" value="ECO:0000247"/>
    <property type="project" value="NTNU_SB"/>
</dbReference>
<dbReference type="GO" id="GO:0019899">
    <property type="term" value="F:enzyme binding"/>
    <property type="evidence" value="ECO:0000353"/>
    <property type="project" value="UniProtKB"/>
</dbReference>
<dbReference type="GO" id="GO:0046982">
    <property type="term" value="F:protein heterodimerization activity"/>
    <property type="evidence" value="ECO:0007669"/>
    <property type="project" value="Ensembl"/>
</dbReference>
<dbReference type="GO" id="GO:0000978">
    <property type="term" value="F:RNA polymerase II cis-regulatory region sequence-specific DNA binding"/>
    <property type="evidence" value="ECO:0000318"/>
    <property type="project" value="GO_Central"/>
</dbReference>
<dbReference type="GO" id="GO:1990837">
    <property type="term" value="F:sequence-specific double-stranded DNA binding"/>
    <property type="evidence" value="ECO:0000314"/>
    <property type="project" value="ARUK-UCL"/>
</dbReference>
<dbReference type="GO" id="GO:0000976">
    <property type="term" value="F:transcription cis-regulatory region binding"/>
    <property type="evidence" value="ECO:0000314"/>
    <property type="project" value="UniProtKB"/>
</dbReference>
<dbReference type="GO" id="GO:0002250">
    <property type="term" value="P:adaptive immune response"/>
    <property type="evidence" value="ECO:0007669"/>
    <property type="project" value="UniProtKB-KW"/>
</dbReference>
<dbReference type="GO" id="GO:0140367">
    <property type="term" value="P:antibacterial innate immune response"/>
    <property type="evidence" value="ECO:0000314"/>
    <property type="project" value="UniProtKB"/>
</dbReference>
<dbReference type="GO" id="GO:0006914">
    <property type="term" value="P:autophagy"/>
    <property type="evidence" value="ECO:0007669"/>
    <property type="project" value="UniProtKB-KW"/>
</dbReference>
<dbReference type="GO" id="GO:0034198">
    <property type="term" value="P:cellular response to amino acid starvation"/>
    <property type="evidence" value="ECO:0000314"/>
    <property type="project" value="UniProtKB"/>
</dbReference>
<dbReference type="GO" id="GO:0009267">
    <property type="term" value="P:cellular response to starvation"/>
    <property type="evidence" value="ECO:0000314"/>
    <property type="project" value="UniProtKB"/>
</dbReference>
<dbReference type="GO" id="GO:0050829">
    <property type="term" value="P:defense response to Gram-negative bacterium"/>
    <property type="evidence" value="ECO:0007669"/>
    <property type="project" value="Ensembl"/>
</dbReference>
<dbReference type="GO" id="GO:0001892">
    <property type="term" value="P:embryonic placenta development"/>
    <property type="evidence" value="ECO:0000250"/>
    <property type="project" value="UniProtKB"/>
</dbReference>
<dbReference type="GO" id="GO:0006959">
    <property type="term" value="P:humoral immune response"/>
    <property type="evidence" value="ECO:0000250"/>
    <property type="project" value="UniProtKB"/>
</dbReference>
<dbReference type="GO" id="GO:0032418">
    <property type="term" value="P:lysosome localization"/>
    <property type="evidence" value="ECO:0000315"/>
    <property type="project" value="UniProtKB"/>
</dbReference>
<dbReference type="GO" id="GO:0007040">
    <property type="term" value="P:lysosome organization"/>
    <property type="evidence" value="ECO:0000314"/>
    <property type="project" value="UniProtKB"/>
</dbReference>
<dbReference type="GO" id="GO:0010508">
    <property type="term" value="P:positive regulation of autophagy"/>
    <property type="evidence" value="ECO:0000314"/>
    <property type="project" value="UniProtKB"/>
</dbReference>
<dbReference type="GO" id="GO:0045893">
    <property type="term" value="P:positive regulation of DNA-templated transcription"/>
    <property type="evidence" value="ECO:0000314"/>
    <property type="project" value="UniProtKB"/>
</dbReference>
<dbReference type="GO" id="GO:0045944">
    <property type="term" value="P:positive regulation of transcription by RNA polymerase II"/>
    <property type="evidence" value="ECO:0000314"/>
    <property type="project" value="UniProtKB"/>
</dbReference>
<dbReference type="GO" id="GO:0006355">
    <property type="term" value="P:regulation of DNA-templated transcription"/>
    <property type="evidence" value="ECO:0000303"/>
    <property type="project" value="UniProtKB"/>
</dbReference>
<dbReference type="GO" id="GO:1905671">
    <property type="term" value="P:regulation of lysosome organization"/>
    <property type="evidence" value="ECO:0000314"/>
    <property type="project" value="UniProtKB"/>
</dbReference>
<dbReference type="GO" id="GO:0006357">
    <property type="term" value="P:regulation of transcription by RNA polymerase II"/>
    <property type="evidence" value="ECO:0000318"/>
    <property type="project" value="GO_Central"/>
</dbReference>
<dbReference type="CDD" id="cd18927">
    <property type="entry name" value="bHLHzip_TFEB"/>
    <property type="match status" value="1"/>
</dbReference>
<dbReference type="FunFam" id="4.10.280.10:FF:000003">
    <property type="entry name" value="microphthalmia-associated transcription factor isoform X1"/>
    <property type="match status" value="1"/>
</dbReference>
<dbReference type="Gene3D" id="4.10.280.10">
    <property type="entry name" value="Helix-loop-helix DNA-binding domain"/>
    <property type="match status" value="1"/>
</dbReference>
<dbReference type="InterPro" id="IPR011598">
    <property type="entry name" value="bHLH_dom"/>
</dbReference>
<dbReference type="InterPro" id="IPR024098">
    <property type="entry name" value="bHLHzip_TFEB"/>
</dbReference>
<dbReference type="InterPro" id="IPR036638">
    <property type="entry name" value="HLH_DNA-bd_sf"/>
</dbReference>
<dbReference type="InterPro" id="IPR021802">
    <property type="entry name" value="MiT/TFE_C"/>
</dbReference>
<dbReference type="InterPro" id="IPR031867">
    <property type="entry name" value="MiT/TFE_N"/>
</dbReference>
<dbReference type="PANTHER" id="PTHR45776">
    <property type="entry name" value="MIP04163P"/>
    <property type="match status" value="1"/>
</dbReference>
<dbReference type="PANTHER" id="PTHR45776:SF5">
    <property type="entry name" value="TRANSCRIPTION FACTOR EB"/>
    <property type="match status" value="1"/>
</dbReference>
<dbReference type="Pfam" id="PF11851">
    <property type="entry name" value="DUF3371"/>
    <property type="match status" value="1"/>
</dbReference>
<dbReference type="Pfam" id="PF00010">
    <property type="entry name" value="HLH"/>
    <property type="match status" value="1"/>
</dbReference>
<dbReference type="Pfam" id="PF15951">
    <property type="entry name" value="MITF_TFEB_C_3_N"/>
    <property type="match status" value="1"/>
</dbReference>
<dbReference type="SMART" id="SM00353">
    <property type="entry name" value="HLH"/>
    <property type="match status" value="1"/>
</dbReference>
<dbReference type="SUPFAM" id="SSF47459">
    <property type="entry name" value="HLH, helix-loop-helix DNA-binding domain"/>
    <property type="match status" value="1"/>
</dbReference>
<dbReference type="PROSITE" id="PS50888">
    <property type="entry name" value="BHLH"/>
    <property type="match status" value="1"/>
</dbReference>
<accession>P19484</accession>
<accession>Q709B3</accession>
<accession>Q7Z6P9</accession>
<accession>Q9BRJ5</accession>
<accession>Q9UJD8</accession>
<name>TFEB_HUMAN</name>
<protein>
    <recommendedName>
        <fullName evidence="33">Transcription factor EB</fullName>
    </recommendedName>
    <alternativeName>
        <fullName>Class E basic helix-loop-helix protein 35</fullName>
        <shortName>bHLHe35</shortName>
    </alternativeName>
</protein>
<sequence length="476" mass="52865">MASRIGLRMQLMREQAQQEEQRERMQQQAVMHYMQQQQQQQQQQLGGPPTPAINTPVHFQSPPPVPGEVLKVQSYLENPTSYHLQQSQHQKVREYLSETYGNKFAAHISPAQGSPKPPPAASPGVRAGHVLSSSAGNSAPNSPMAMLHIGSNPERELDDVIDNIMRLDDVLGYINPEMQMPNTLPLSSSHLNVYSSDPQVTASLVGVTSSSCPADLTQKRELTDAESRALAKERQKKDNHNLIERRRRFNINDRIKELGMLIPKANDLDVRWNKGTILKASVDYIRRMQKDLQKSRELENHSRRLEMTNKQLWLRIQELEMQARVHGLPTTSPSGMNMAELAQQVVKQELPSEEGPGEALMLGAEVPDPEPLPALPPQAPLPLPTQPPSPFHHLDFSHSLSFGGREDEGPPGYPEPLAPGHGSPFPSLSKKDLDLMLLDDSLLPLASDPLLSTMSPEASKASSRRSSFSMEEGDVL</sequence>
<feature type="chain" id="PRO_0000127473" description="Transcription factor EB">
    <location>
        <begin position="1"/>
        <end position="476"/>
    </location>
</feature>
<feature type="domain" description="bHLH" evidence="3">
    <location>
        <begin position="235"/>
        <end position="288"/>
    </location>
</feature>
<feature type="region of interest" description="Interaction with ACSS2" evidence="19">
    <location>
        <begin position="1"/>
        <end position="167"/>
    </location>
</feature>
<feature type="region of interest" description="Disordered" evidence="4">
    <location>
        <begin position="1"/>
        <end position="66"/>
    </location>
</feature>
<feature type="region of interest" description="Disordered" evidence="4">
    <location>
        <begin position="107"/>
        <end position="142"/>
    </location>
</feature>
<feature type="region of interest" description="Strong transcription activation domain" evidence="2">
    <location>
        <begin position="156"/>
        <end position="165"/>
    </location>
</feature>
<feature type="region of interest" description="Leucine-zipper">
    <location>
        <begin position="298"/>
        <end position="319"/>
    </location>
</feature>
<feature type="region of interest" description="Disordered" evidence="4">
    <location>
        <begin position="349"/>
        <end position="430"/>
    </location>
</feature>
<feature type="region of interest" description="Disordered" evidence="4">
    <location>
        <begin position="447"/>
        <end position="476"/>
    </location>
</feature>
<feature type="short sequence motif" description="Nuclear export signal" evidence="21">
    <location>
        <begin position="136"/>
        <end position="153"/>
    </location>
</feature>
<feature type="short sequence motif" description="Nuclear localization signal" evidence="13 28">
    <location>
        <begin position="245"/>
        <end position="248"/>
    </location>
</feature>
<feature type="compositionally biased region" description="Low complexity" evidence="4">
    <location>
        <begin position="26"/>
        <end position="44"/>
    </location>
</feature>
<feature type="compositionally biased region" description="Low complexity" evidence="4">
    <location>
        <begin position="132"/>
        <end position="142"/>
    </location>
</feature>
<feature type="compositionally biased region" description="Pro residues" evidence="4">
    <location>
        <begin position="369"/>
        <end position="390"/>
    </location>
</feature>
<feature type="compositionally biased region" description="Low complexity" evidence="4">
    <location>
        <begin position="447"/>
        <end position="469"/>
    </location>
</feature>
<feature type="site" description="(Microbial infection) Cleavage; by Coxsackievirus B3 protease 3C" evidence="14">
    <location>
        <begin position="60"/>
        <end position="61"/>
    </location>
</feature>
<feature type="modified residue" description="Phosphoserine" evidence="1">
    <location>
        <position position="109"/>
    </location>
</feature>
<feature type="modified residue" description="Phosphoserine" evidence="1">
    <location>
        <position position="114"/>
    </location>
</feature>
<feature type="modified residue" description="Phosphoserine" evidence="42 43">
    <location>
        <position position="122"/>
    </location>
</feature>
<feature type="modified residue" description="Phosphoserine" evidence="21 40 42">
    <location>
        <position position="138"/>
    </location>
</feature>
<feature type="modified residue" description="Phosphoserine; by MTOR" evidence="9 10 21 40 42">
    <location>
        <position position="142"/>
    </location>
</feature>
<feature type="modified residue" description="Phosphothreonine" evidence="42">
    <location>
        <position position="183"/>
    </location>
</feature>
<feature type="modified residue" description="Phosphoserine; by MTOR" evidence="11 12 13 15 16 21 24 27 28">
    <location>
        <position position="211"/>
    </location>
</feature>
<feature type="modified residue" description="S-(2,3-dicarboxypropyl)cysteine" evidence="27">
    <location>
        <position position="212"/>
    </location>
</feature>
<feature type="modified residue" description="Phosphoserine" evidence="9">
    <location>
        <position position="332"/>
    </location>
</feature>
<feature type="modified residue" description="Phosphoserine" evidence="9 43">
    <location>
        <position position="423"/>
    </location>
</feature>
<feature type="modified residue" description="Phosphoserine" evidence="42">
    <location>
        <position position="441"/>
    </location>
</feature>
<feature type="modified residue" description="Phosphoserine" evidence="1">
    <location>
        <position position="466"/>
    </location>
</feature>
<feature type="modified residue" description="Phosphoserine" evidence="41 43">
    <location>
        <position position="467"/>
    </location>
</feature>
<feature type="modified residue" description="Phosphoserine" evidence="1">
    <location>
        <position position="469"/>
    </location>
</feature>
<feature type="splice variant" id="VSP_002159" description="In isoform 2." evidence="32 33">
    <location>
        <begin position="72"/>
        <end position="156"/>
    </location>
</feature>
<feature type="mutagenesis site" description="Abolished recruitment to lysosomal membrane in response to nutrients, leading to constitutive nuclear localization." evidence="13">
    <original>SR</original>
    <variation>AA</variation>
    <location>
        <begin position="3"/>
        <end position="4"/>
    </location>
</feature>
<feature type="mutagenesis site" description="Abolished recruitment to lysosomal membrane in response to nutrients, leading to constitutive nuclear localization." evidence="13">
    <original>QL</original>
    <variation>AA</variation>
    <location>
        <begin position="10"/>
        <end position="11"/>
    </location>
</feature>
<feature type="mutagenesis site" description="Does not affect recruitment to lysosomal membrane in response to nutrients." evidence="13">
    <original>EE</original>
    <variation>AA</variation>
    <location>
        <begin position="19"/>
        <end position="20"/>
    </location>
</feature>
<feature type="mutagenesis site" description="Does not affect recruitment to lysosomal membrane in response to nutrients." evidence="13">
    <original>RER</original>
    <variation>AAA</variation>
    <location>
        <begin position="22"/>
        <end position="24"/>
    </location>
</feature>
<feature type="mutagenesis site" description="Impaired cleavage by Coxsackievirus B3 protease 3C." evidence="25">
    <original>QS</original>
    <variation>LP</variation>
    <location>
        <begin position="60"/>
        <end position="61"/>
    </location>
</feature>
<feature type="mutagenesis site" description="Impaired nuclear export in response to nutrient availability." evidence="21">
    <original>S</original>
    <variation>A</variation>
    <location>
        <position position="138"/>
    </location>
</feature>
<feature type="mutagenesis site" description="Impaired phosphorylation by MTOR, leading to constitutive nuclear localization and transcription factor activity. Impaired nuclear export in response to nutrient availability." evidence="9 10 18 21">
    <original>S</original>
    <variation>A</variation>
    <location>
        <position position="142"/>
    </location>
</feature>
<feature type="mutagenesis site" description="Mimics phosphorylation status; abolished translocation to the nucleus in response to starvation." evidence="9">
    <original>S</original>
    <variation>D</variation>
    <location>
        <position position="142"/>
    </location>
</feature>
<feature type="mutagenesis site" description="Abolished nuclear export in response to nutrient availability." evidence="21">
    <original>MAMLHI</original>
    <variation>AAMAHA</variation>
    <location>
        <begin position="144"/>
        <end position="149"/>
    </location>
</feature>
<feature type="mutagenesis site" description="Does not affect interaction with 14-3-3/YWHA and subcellular localization." evidence="11">
    <original>S</original>
    <variation>A</variation>
    <location>
        <position position="209"/>
    </location>
</feature>
<feature type="mutagenesis site" description="Does not affect interaction with 14-3-3/YWHA and subcellular localization." evidence="11">
    <original>S</original>
    <variation>A</variation>
    <location>
        <position position="210"/>
    </location>
</feature>
<feature type="mutagenesis site" description="Impaired phosphorylation by MTOR, leading to reduced interaction with 14-3-3/YWHA and constitutive nuclear localization. Does not affect nuclear export in response to nutrient availability." evidence="11 12 13 21 28">
    <original>S</original>
    <variation>A</variation>
    <location>
        <position position="211"/>
    </location>
</feature>
<feature type="mutagenesis site" description="Mimics phosphorylation; leading to increased interaction with 14-3-3/YWHA and impaired nuclear localization." evidence="27">
    <original>S</original>
    <variation>D</variation>
    <location>
        <position position="211"/>
    </location>
</feature>
<feature type="mutagenesis site" description="Abolished alkylation, abolishing ability to prevent association with 14-3-3/YWHA adapters." evidence="27">
    <original>C</original>
    <variation>S</variation>
    <location>
        <position position="212"/>
    </location>
</feature>
<feature type="mutagenesis site" description="Abolished nuclear localization upon mTORC1 inactivation." evidence="13 28">
    <original>RRR</original>
    <variation>AAA</variation>
    <location>
        <begin position="245"/>
        <end position="247"/>
    </location>
</feature>
<feature type="mutagenesis site" description="In MutCom_1 mutant; abolished ability to bind eltrombopag drug; when associated with 271-A--A-274." evidence="29">
    <original>RFNINDR</original>
    <variation>AFNINDA</variation>
    <location>
        <begin position="248"/>
        <end position="254"/>
    </location>
</feature>
<feature type="mutagenesis site" description="In MutCom_2 mutant; does not affect ability to bind eltrombopag drug." evidence="29">
    <original>KELGMLIPK</original>
    <variation>AELGMLIPA</variation>
    <location>
        <begin position="256"/>
        <end position="264"/>
    </location>
</feature>
<feature type="mutagenesis site" description="In MutCom_1 mutant; abolished ability to bind eltrombopag drug; when associated with 248-A--A-254." evidence="29">
    <original>RWNK</original>
    <variation>AWNA</variation>
    <location>
        <begin position="271"/>
        <end position="274"/>
    </location>
</feature>
<feature type="mutagenesis site" description="Abolished ability to bind eltrombopag drug." evidence="29">
    <original>R</original>
    <variation>A</variation>
    <location>
        <position position="271"/>
    </location>
</feature>
<feature type="mutagenesis site" description="In MutCom_3 mutant; does not affect ability to bind eltrombopag drug." evidence="29">
    <original>KASVDYIRRMQK</original>
    <variation>AASVDYIAAMQA</variation>
    <location>
        <begin position="279"/>
        <end position="290"/>
    </location>
</feature>
<feature type="mutagenesis site" description="In MutCom_4 mutant; does not affect ability to bind eltrombopag drug." evidence="29">
    <original>RELENHSRRLEMTNKQLWLR</original>
    <variation>AELENHSAALEMTNAQLWLA</variation>
    <location>
        <begin position="296"/>
        <end position="315"/>
    </location>
</feature>
<feature type="mutagenesis site" description="Does not affect interaction with 14-3-3/YWHA and subcellular localization." evidence="11">
    <original>TS</original>
    <variation>AA</variation>
    <location>
        <begin position="331"/>
        <end position="332"/>
    </location>
</feature>
<feature type="mutagenesis site" description="Does not affect nuclear localization." evidence="9">
    <original>S</original>
    <variation>A</variation>
    <location>
        <position position="332"/>
    </location>
</feature>
<feature type="mutagenesis site" description="Does not affect nuclear localization." evidence="9">
    <original>S</original>
    <variation>A</variation>
    <location>
        <position position="423"/>
    </location>
</feature>
<feature type="sequence conflict" description="In Ref. 1; AAA36730." evidence="34" ref="1">
    <original>A</original>
    <variation>AA</variation>
    <location>
        <position position="106"/>
    </location>
</feature>
<feature type="sequence conflict" description="In Ref. 1; AAA36730." evidence="34" ref="1">
    <original>GSPKPPPAASPGVRAGHVLSSSAGNSAPN</original>
    <variation>ALRNPHQPPPQGCELDTCCPPPLATVLPI</variation>
    <location>
        <begin position="113"/>
        <end position="141"/>
    </location>
</feature>
<feature type="sequence conflict" description="In Ref. 1; AAA36730." evidence="34" ref="1">
    <original>DDV</original>
    <variation>TMS</variation>
    <location>
        <begin position="168"/>
        <end position="170"/>
    </location>
</feature>
<feature type="helix" evidence="44">
    <location>
        <begin position="4"/>
        <end position="40"/>
    </location>
</feature>
<feature type="strand" evidence="44">
    <location>
        <begin position="43"/>
        <end position="48"/>
    </location>
</feature>
<feature type="helix" evidence="45">
    <location>
        <begin position="67"/>
        <end position="70"/>
    </location>
</feature>
<feature type="strand" evidence="45">
    <location>
        <begin position="75"/>
        <end position="78"/>
    </location>
</feature>
<feature type="helix" evidence="44">
    <location>
        <begin position="81"/>
        <end position="100"/>
    </location>
</feature>
<feature type="helix" evidence="45">
    <location>
        <begin position="101"/>
        <end position="107"/>
    </location>
</feature>
<feature type="helix" evidence="46">
    <location>
        <begin position="252"/>
        <end position="261"/>
    </location>
</feature>
<feature type="helix" evidence="46">
    <location>
        <begin position="263"/>
        <end position="265"/>
    </location>
</feature>
<feature type="turn" evidence="46">
    <location>
        <begin position="270"/>
        <end position="272"/>
    </location>
</feature>
<feature type="helix" evidence="46">
    <location>
        <begin position="274"/>
        <end position="294"/>
    </location>
</feature>
<feature type="turn" evidence="46">
    <location>
        <begin position="295"/>
        <end position="297"/>
    </location>
</feature>
<feature type="helix" evidence="46">
    <location>
        <begin position="298"/>
        <end position="318"/>
    </location>
</feature>
<reference key="1">
    <citation type="journal article" date="1990" name="Mol. Cell. Biol.">
        <title>A helix-loop-helix protein related to the immunoglobulin E box-binding proteins.</title>
        <authorList>
            <person name="Carr C.S."/>
            <person name="Sharp P.A."/>
        </authorList>
    </citation>
    <scope>NUCLEOTIDE SEQUENCE [MRNA] (ISOFORMS 1 AND 2)</scope>
    <scope>FUNCTION</scope>
    <source>
        <tissue>B-cell</tissue>
    </source>
</reference>
<reference key="2">
    <citation type="journal article" date="2004" name="Nucleic Acids Res.">
        <title>Regulation of the MiTF/TFE bHLH-LZ transcription factors through restricted spatial expression and alternative splicing of functional domains.</title>
        <authorList>
            <person name="Kuiper R.P."/>
            <person name="Schepens M."/>
            <person name="Thijssen J."/>
            <person name="Schoenmakers E.F.P.M."/>
            <person name="Geurts van Kessel A."/>
        </authorList>
    </citation>
    <scope>NUCLEOTIDE SEQUENCE [MRNA] (ISOFORM 1)</scope>
    <source>
        <tissue>Kidney</tissue>
    </source>
</reference>
<reference key="3">
    <citation type="journal article" date="2003" name="Nature">
        <title>The DNA sequence and analysis of human chromosome 6.</title>
        <authorList>
            <person name="Mungall A.J."/>
            <person name="Palmer S.A."/>
            <person name="Sims S.K."/>
            <person name="Edwards C.A."/>
            <person name="Ashurst J.L."/>
            <person name="Wilming L."/>
            <person name="Jones M.C."/>
            <person name="Horton R."/>
            <person name="Hunt S.E."/>
            <person name="Scott C.E."/>
            <person name="Gilbert J.G.R."/>
            <person name="Clamp M.E."/>
            <person name="Bethel G."/>
            <person name="Milne S."/>
            <person name="Ainscough R."/>
            <person name="Almeida J.P."/>
            <person name="Ambrose K.D."/>
            <person name="Andrews T.D."/>
            <person name="Ashwell R.I.S."/>
            <person name="Babbage A.K."/>
            <person name="Bagguley C.L."/>
            <person name="Bailey J."/>
            <person name="Banerjee R."/>
            <person name="Barker D.J."/>
            <person name="Barlow K.F."/>
            <person name="Bates K."/>
            <person name="Beare D.M."/>
            <person name="Beasley H."/>
            <person name="Beasley O."/>
            <person name="Bird C.P."/>
            <person name="Blakey S.E."/>
            <person name="Bray-Allen S."/>
            <person name="Brook J."/>
            <person name="Brown A.J."/>
            <person name="Brown J.Y."/>
            <person name="Burford D.C."/>
            <person name="Burrill W."/>
            <person name="Burton J."/>
            <person name="Carder C."/>
            <person name="Carter N.P."/>
            <person name="Chapman J.C."/>
            <person name="Clark S.Y."/>
            <person name="Clark G."/>
            <person name="Clee C.M."/>
            <person name="Clegg S."/>
            <person name="Cobley V."/>
            <person name="Collier R.E."/>
            <person name="Collins J.E."/>
            <person name="Colman L.K."/>
            <person name="Corby N.R."/>
            <person name="Coville G.J."/>
            <person name="Culley K.M."/>
            <person name="Dhami P."/>
            <person name="Davies J."/>
            <person name="Dunn M."/>
            <person name="Earthrowl M.E."/>
            <person name="Ellington A.E."/>
            <person name="Evans K.A."/>
            <person name="Faulkner L."/>
            <person name="Francis M.D."/>
            <person name="Frankish A."/>
            <person name="Frankland J."/>
            <person name="French L."/>
            <person name="Garner P."/>
            <person name="Garnett J."/>
            <person name="Ghori M.J."/>
            <person name="Gilby L.M."/>
            <person name="Gillson C.J."/>
            <person name="Glithero R.J."/>
            <person name="Grafham D.V."/>
            <person name="Grant M."/>
            <person name="Gribble S."/>
            <person name="Griffiths C."/>
            <person name="Griffiths M.N.D."/>
            <person name="Hall R."/>
            <person name="Halls K.S."/>
            <person name="Hammond S."/>
            <person name="Harley J.L."/>
            <person name="Hart E.A."/>
            <person name="Heath P.D."/>
            <person name="Heathcott R."/>
            <person name="Holmes S.J."/>
            <person name="Howden P.J."/>
            <person name="Howe K.L."/>
            <person name="Howell G.R."/>
            <person name="Huckle E."/>
            <person name="Humphray S.J."/>
            <person name="Humphries M.D."/>
            <person name="Hunt A.R."/>
            <person name="Johnson C.M."/>
            <person name="Joy A.A."/>
            <person name="Kay M."/>
            <person name="Keenan S.J."/>
            <person name="Kimberley A.M."/>
            <person name="King A."/>
            <person name="Laird G.K."/>
            <person name="Langford C."/>
            <person name="Lawlor S."/>
            <person name="Leongamornlert D.A."/>
            <person name="Leversha M."/>
            <person name="Lloyd C.R."/>
            <person name="Lloyd D.M."/>
            <person name="Loveland J.E."/>
            <person name="Lovell J."/>
            <person name="Martin S."/>
            <person name="Mashreghi-Mohammadi M."/>
            <person name="Maslen G.L."/>
            <person name="Matthews L."/>
            <person name="McCann O.T."/>
            <person name="McLaren S.J."/>
            <person name="McLay K."/>
            <person name="McMurray A."/>
            <person name="Moore M.J.F."/>
            <person name="Mullikin J.C."/>
            <person name="Niblett D."/>
            <person name="Nickerson T."/>
            <person name="Novik K.L."/>
            <person name="Oliver K."/>
            <person name="Overton-Larty E.K."/>
            <person name="Parker A."/>
            <person name="Patel R."/>
            <person name="Pearce A.V."/>
            <person name="Peck A.I."/>
            <person name="Phillimore B.J.C.T."/>
            <person name="Phillips S."/>
            <person name="Plumb R.W."/>
            <person name="Porter K.M."/>
            <person name="Ramsey Y."/>
            <person name="Ranby S.A."/>
            <person name="Rice C.M."/>
            <person name="Ross M.T."/>
            <person name="Searle S.M."/>
            <person name="Sehra H.K."/>
            <person name="Sheridan E."/>
            <person name="Skuce C.D."/>
            <person name="Smith S."/>
            <person name="Smith M."/>
            <person name="Spraggon L."/>
            <person name="Squares S.L."/>
            <person name="Steward C.A."/>
            <person name="Sycamore N."/>
            <person name="Tamlyn-Hall G."/>
            <person name="Tester J."/>
            <person name="Theaker A.J."/>
            <person name="Thomas D.W."/>
            <person name="Thorpe A."/>
            <person name="Tracey A."/>
            <person name="Tromans A."/>
            <person name="Tubby B."/>
            <person name="Wall M."/>
            <person name="Wallis J.M."/>
            <person name="West A.P."/>
            <person name="White S.S."/>
            <person name="Whitehead S.L."/>
            <person name="Whittaker H."/>
            <person name="Wild A."/>
            <person name="Willey D.J."/>
            <person name="Wilmer T.E."/>
            <person name="Wood J.M."/>
            <person name="Wray P.W."/>
            <person name="Wyatt J.C."/>
            <person name="Young L."/>
            <person name="Younger R.M."/>
            <person name="Bentley D.R."/>
            <person name="Coulson A."/>
            <person name="Durbin R.M."/>
            <person name="Hubbard T."/>
            <person name="Sulston J.E."/>
            <person name="Dunham I."/>
            <person name="Rogers J."/>
            <person name="Beck S."/>
        </authorList>
    </citation>
    <scope>NUCLEOTIDE SEQUENCE [LARGE SCALE GENOMIC DNA]</scope>
</reference>
<reference key="4">
    <citation type="journal article" date="2004" name="Genome Res.">
        <title>The status, quality, and expansion of the NIH full-length cDNA project: the Mammalian Gene Collection (MGC).</title>
        <authorList>
            <consortium name="The MGC Project Team"/>
        </authorList>
    </citation>
    <scope>NUCLEOTIDE SEQUENCE [LARGE SCALE MRNA] (ISOFORM 1)</scope>
    <scope>NUCLEOTIDE SEQUENCE [LARGE SCALE MRNA] OF 58-476 (ISOFORM 2)</scope>
    <source>
        <tissue>Brain</tissue>
        <tissue>Lung</tissue>
    </source>
</reference>
<reference key="5">
    <citation type="journal article" date="1991" name="Genes Dev.">
        <title>TFEB has DNA-binding and oligomerization properties of a unique helix-loop-helix/leucine-zipper family.</title>
        <authorList>
            <person name="Fisher D.E."/>
            <person name="Carr C.S."/>
            <person name="Parent L.A."/>
            <person name="Sharp P.A."/>
        </authorList>
    </citation>
    <scope>DNA-BINDING</scope>
    <scope>FUNCTION</scope>
    <scope>INTERACTION WITH TFE3</scope>
    <scope>DOMAIN</scope>
</reference>
<reference key="6">
    <citation type="journal article" date="2005" name="J. Biol. Chem.">
        <title>Sumoylation of MITF and its related family members TFE3 and TFEB.</title>
        <authorList>
            <person name="Miller A.J."/>
            <person name="Levy C."/>
            <person name="Davis I.J."/>
            <person name="Razin E."/>
            <person name="Fisher D.E."/>
        </authorList>
    </citation>
    <scope>SUMOYLATION</scope>
    <scope>INTERACTION WITH MITF</scope>
</reference>
<reference key="7">
    <citation type="journal article" date="2008" name="Proc. Natl. Acad. Sci. U.S.A.">
        <title>A quantitative atlas of mitotic phosphorylation.</title>
        <authorList>
            <person name="Dephoure N."/>
            <person name="Zhou C."/>
            <person name="Villen J."/>
            <person name="Beausoleil S.A."/>
            <person name="Bakalarski C.E."/>
            <person name="Elledge S.J."/>
            <person name="Gygi S.P."/>
        </authorList>
    </citation>
    <scope>PHOSPHORYLATION [LARGE SCALE ANALYSIS] AT SER-138 AND SER-142</scope>
    <scope>IDENTIFICATION BY MASS SPECTROMETRY [LARGE SCALE ANALYSIS]</scope>
    <source>
        <tissue>Cervix carcinoma</tissue>
    </source>
</reference>
<reference key="8">
    <citation type="journal article" date="2009" name="Sci. Signal.">
        <title>Quantitative phosphoproteomic analysis of T cell receptor signaling reveals system-wide modulation of protein-protein interactions.</title>
        <authorList>
            <person name="Mayya V."/>
            <person name="Lundgren D.H."/>
            <person name="Hwang S.-I."/>
            <person name="Rezaul K."/>
            <person name="Wu L."/>
            <person name="Eng J.K."/>
            <person name="Rodionov V."/>
            <person name="Han D.K."/>
        </authorList>
    </citation>
    <scope>PHOSPHORYLATION [LARGE SCALE ANALYSIS] AT SER-467</scope>
    <scope>IDENTIFICATION BY MASS SPECTROMETRY [LARGE SCALE ANALYSIS]</scope>
    <source>
        <tissue>Leukemic T-cell</tissue>
    </source>
</reference>
<reference key="9">
    <citation type="journal article" date="2009" name="Science">
        <title>A gene network regulating lysosomal biogenesis and function.</title>
        <authorList>
            <person name="Sardiello M."/>
            <person name="Palmieri M."/>
            <person name="di Ronza A."/>
            <person name="Medina D.L."/>
            <person name="Valenza M."/>
            <person name="Gennarino V.A."/>
            <person name="Di Malta C."/>
            <person name="Donaudy F."/>
            <person name="Embrione V."/>
            <person name="Polishchuk R.S."/>
            <person name="Banfi S."/>
            <person name="Parenti G."/>
            <person name="Cattaneo E."/>
            <person name="Ballabio A."/>
        </authorList>
    </citation>
    <scope>FUNCTION</scope>
    <scope>DNA-BINDING</scope>
</reference>
<reference key="10">
    <citation type="journal article" date="2010" name="Sci. Signal.">
        <title>Quantitative phosphoproteomics reveals widespread full phosphorylation site occupancy during mitosis.</title>
        <authorList>
            <person name="Olsen J.V."/>
            <person name="Vermeulen M."/>
            <person name="Santamaria A."/>
            <person name="Kumar C."/>
            <person name="Miller M.L."/>
            <person name="Jensen L.J."/>
            <person name="Gnad F."/>
            <person name="Cox J."/>
            <person name="Jensen T.S."/>
            <person name="Nigg E.A."/>
            <person name="Brunak S."/>
            <person name="Mann M."/>
        </authorList>
    </citation>
    <scope>PHOSPHORYLATION [LARGE SCALE ANALYSIS] AT SER-122; SER-138; SER-142; THR-183 AND SER-441</scope>
    <scope>IDENTIFICATION BY MASS SPECTROMETRY [LARGE SCALE ANALYSIS]</scope>
    <source>
        <tissue>Cervix carcinoma</tissue>
    </source>
</reference>
<reference key="11">
    <citation type="journal article" date="2011" name="Science">
        <title>TFEB links autophagy to lysosomal biogenesis.</title>
        <authorList>
            <person name="Settembre C."/>
            <person name="Di Malta C."/>
            <person name="Polito V.A."/>
            <person name="Garcia Arencibia M."/>
            <person name="Vetrini F."/>
            <person name="Erdin S."/>
            <person name="Erdin S.U."/>
            <person name="Huynh T."/>
            <person name="Medina D."/>
            <person name="Colella P."/>
            <person name="Sardiello M."/>
            <person name="Rubinsztein D.C."/>
            <person name="Ballabio A."/>
        </authorList>
    </citation>
    <scope>FUNCTION</scope>
    <scope>SUBCELLULAR LOCATION</scope>
    <scope>PHOSPHORYLATION AT SER-142; SER-332 AND SER-423</scope>
    <scope>MUTAGENESIS OF SER-142; SER-332 AND SER-423</scope>
</reference>
<reference key="12">
    <citation type="journal article" date="2012" name="Autophagy">
        <title>MTORC1 functions as a transcriptional regulator of autophagy by preventing nuclear transport of TFEB.</title>
        <authorList>
            <person name="Martina J.A."/>
            <person name="Chen Y."/>
            <person name="Gucek M."/>
            <person name="Puertollano R."/>
        </authorList>
    </citation>
    <scope>FUNCTION</scope>
    <scope>SUBCELLULAR LOCATION</scope>
    <scope>PHOSPHORYLATION AT SER-211</scope>
    <scope>MUTAGENESIS OF SER-209; SER-210; SER-211 AND 331-THR-SER-332</scope>
</reference>
<reference key="13">
    <citation type="journal article" date="2012" name="EMBO J.">
        <title>A lysosome-to-nucleus signalling mechanism senses and regulates the lysosome via mTOR and TFEB.</title>
        <authorList>
            <person name="Settembre C."/>
            <person name="Zoncu R."/>
            <person name="Medina D.L."/>
            <person name="Vetrini F."/>
            <person name="Erdin S."/>
            <person name="Erdin S."/>
            <person name="Huynh T."/>
            <person name="Ferron M."/>
            <person name="Karsenty G."/>
            <person name="Vellard M.C."/>
            <person name="Facchinetti V."/>
            <person name="Sabatini D.M."/>
            <person name="Ballabio A."/>
        </authorList>
    </citation>
    <scope>FUNCTION</scope>
    <scope>SUBCELLULAR LOCATION</scope>
    <scope>PHOSPHORYLATION AT SER-142</scope>
    <scope>MUTAGENESIS OF SER-142</scope>
</reference>
<reference key="14">
    <citation type="journal article" date="2012" name="Sci. Signal.">
        <title>The transcription factor TFEB links mTORC1 signaling to transcriptional control of lysosome homeostasis.</title>
        <authorList>
            <person name="Roczniak-Ferguson A."/>
            <person name="Petit C.S."/>
            <person name="Froehlich F."/>
            <person name="Qian S."/>
            <person name="Ky J."/>
            <person name="Angarola B."/>
            <person name="Walther T.C."/>
            <person name="Ferguson S.M."/>
        </authorList>
    </citation>
    <scope>FUNCTION</scope>
    <scope>SUBCELLULAR LOCATION</scope>
    <scope>INTERACTION WITH YWHA</scope>
    <scope>PHOSPHORYLATION AT SER-211</scope>
    <scope>MUTAGENESIS OF SER-211</scope>
</reference>
<reference key="15">
    <citation type="journal article" date="2013" name="J. Cell Biol.">
        <title>Rag GTPases mediate amino acid-dependent recruitment of TFEB and MITF to lysosomes.</title>
        <authorList>
            <person name="Martina J.A."/>
            <person name="Puertollano R."/>
        </authorList>
    </citation>
    <scope>SUBCELLULAR LOCATION</scope>
    <scope>INTERACTION WITH SMALL GTPASES RAG</scope>
    <scope>PHOSPHORYLATION AT SER-211</scope>
    <scope>MUTAGENESIS OF 3-SER-ARG-4; 10-GLN-LEU-11; 19-GLU-GLU-20; 22-ARG--ARG-24; SER-211 AND 245-ARG--ARG-247</scope>
</reference>
<reference key="16">
    <citation type="journal article" date="2013" name="J. Cell Biol.">
        <title>Recruitment of folliculin to lysosomes supports the amino acid-dependent activation of Rag GTPases.</title>
        <authorList>
            <person name="Petit C.S."/>
            <person name="Roczniak-Ferguson A."/>
            <person name="Ferguson S.M."/>
        </authorList>
    </citation>
    <scope>SUBCELLULAR LOCATION</scope>
    <scope>PHOSPHORYLATION AT SER-211</scope>
</reference>
<reference key="17">
    <citation type="journal article" date="2013" name="J. Proteome Res.">
        <title>Toward a comprehensive characterization of a human cancer cell phosphoproteome.</title>
        <authorList>
            <person name="Zhou H."/>
            <person name="Di Palma S."/>
            <person name="Preisinger C."/>
            <person name="Peng M."/>
            <person name="Polat A.N."/>
            <person name="Heck A.J."/>
            <person name="Mohammed S."/>
        </authorList>
    </citation>
    <scope>PHOSPHORYLATION [LARGE SCALE ANALYSIS] AT SER-122; SER-423 AND SER-467</scope>
    <scope>IDENTIFICATION BY MASS SPECTROMETRY [LARGE SCALE ANALYSIS]</scope>
    <source>
        <tissue>Cervix carcinoma</tissue>
        <tissue>Erythroleukemia</tissue>
    </source>
</reference>
<reference key="18">
    <citation type="journal article" date="2013" name="Mol. Cell">
        <title>ZKSCAN3 is a master transcriptional repressor of autophagy.</title>
        <authorList>
            <person name="Chauhan S."/>
            <person name="Goodwin J.G."/>
            <person name="Chauhan S."/>
            <person name="Manyam G."/>
            <person name="Wang J."/>
            <person name="Kamat A.M."/>
            <person name="Boyd D.D."/>
        </authorList>
    </citation>
    <scope>FUNCTION</scope>
    <scope>SUBCELLULAR LOCATION</scope>
</reference>
<reference key="19">
    <citation type="journal article" date="2015" name="Nat. Cell Biol.">
        <title>Lysosomal calcium signalling regulates autophagy through calcineurin and TFEB.</title>
        <authorList>
            <person name="Medina D.L."/>
            <person name="Di Paola S."/>
            <person name="Peluso I."/>
            <person name="Armani A."/>
            <person name="De Stefani D."/>
            <person name="Venditti R."/>
            <person name="Montefusco S."/>
            <person name="Scotto-Rosato A."/>
            <person name="Prezioso C."/>
            <person name="Forrester A."/>
            <person name="Settembre C."/>
            <person name="Wang W."/>
            <person name="Gao Q."/>
            <person name="Xu H."/>
            <person name="Sandri M."/>
            <person name="Rizzuto R."/>
            <person name="De Matteis M.A."/>
            <person name="Ballabio A."/>
        </authorList>
    </citation>
    <scope>FUNCTION</scope>
    <scope>SUBCELLULAR LOCATION</scope>
    <scope>PHOSPHORYLATION AT SER-211</scope>
    <scope>DEPHOSPHORYLATION</scope>
</reference>
<reference key="20">
    <citation type="journal article" date="2016" name="Cell Rep.">
        <title>An evolutionarily conserved PLC-PKD-TFEB pathway for host defense.</title>
        <authorList>
            <person name="Najibi M."/>
            <person name="Labed S.A."/>
            <person name="Visvikis O."/>
            <person name="Irazoqui J.E."/>
        </authorList>
    </citation>
    <scope>SUBCELLULAR LOCATION</scope>
</reference>
<reference key="21">
    <citation type="journal article" date="2016" name="Nat. Commun.">
        <title>The Parkinson's disease-associated genes ATP13A2 and SYT11 regulate autophagy via a common pathway.</title>
        <authorList>
            <person name="Bento C.F."/>
            <person name="Ashkenazi A."/>
            <person name="Jimenez-Sanchez M."/>
            <person name="Rubinsztein D.C."/>
        </authorList>
    </citation>
    <scope>SUBCELLULAR LOCATION</scope>
    <scope>FUNCTION</scope>
    <scope>MUTAGENESIS OF SER-142</scope>
</reference>
<reference key="22">
    <citation type="journal article" date="2017" name="Mol. Cell">
        <title>Nucleus-Translocated ACSS2 Promotes Gene Transcription for Lysosomal Biogenesis and Autophagy.</title>
        <authorList>
            <person name="Li X."/>
            <person name="Yu W."/>
            <person name="Qian X."/>
            <person name="Xia Y."/>
            <person name="Zheng Y."/>
            <person name="Lee J.H."/>
            <person name="Li W."/>
            <person name="Lyu J."/>
            <person name="Rao G."/>
            <person name="Zhang X."/>
            <person name="Qian C.N."/>
            <person name="Rozen S.G."/>
            <person name="Jiang T."/>
            <person name="Lu Z."/>
        </authorList>
    </citation>
    <scope>FUNCTION</scope>
    <scope>INTERACTION WITH ACSS2</scope>
    <scope>SUBCELLULAR LOCATION</scope>
</reference>
<reference key="23">
    <citation type="journal article" date="2017" name="Nat. Commun.">
        <title>TFEB regulates lysosomal positioning by modulating TMEM55B expression and JIP4 recruitment to lysosomes.</title>
        <authorList>
            <person name="Willett R."/>
            <person name="Martina J.A."/>
            <person name="Zewe J.P."/>
            <person name="Wills R."/>
            <person name="Hammond G.R.V."/>
            <person name="Puertollano R."/>
        </authorList>
    </citation>
    <scope>FUNCTION</scope>
</reference>
<reference key="24">
    <citation type="journal article" date="2018" name="Nat. Commun.">
        <title>mTOR-dependent phosphorylation controls TFEB nuclear export.</title>
        <authorList>
            <person name="Napolitano G."/>
            <person name="Esposito A."/>
            <person name="Choi H."/>
            <person name="Matarese M."/>
            <person name="Benedetti V."/>
            <person name="Di Malta C."/>
            <person name="Monfregola J."/>
            <person name="Medina D.L."/>
            <person name="Lippincott-Schwartz J."/>
            <person name="Ballabio A."/>
        </authorList>
    </citation>
    <scope>FUNCTION</scope>
    <scope>SUBCELLULAR LOCATION</scope>
    <scope>NUCLEAR EXPORT SIGNAL</scope>
    <scope>PHOSPHORYLATION AT SER-138; SER-142 AND SER-211</scope>
    <scope>MUTAGENESIS OF SER-138; SER-142; 144-MET--ILE-149 AND SER-211</scope>
</reference>
<reference key="25">
    <citation type="journal article" date="2019" name="Science">
        <title>Structural mechanism of a Rag GTPase activation checkpoint by the lysosomal folliculin complex.</title>
        <authorList>
            <person name="Lawrence R.E."/>
            <person name="Fromm S.A."/>
            <person name="Fu Y."/>
            <person name="Yokom A.L."/>
            <person name="Kim D.J."/>
            <person name="Thelen A.M."/>
            <person name="Young L.N."/>
            <person name="Lim C.Y."/>
            <person name="Samelson A.J."/>
            <person name="Hurley J.H."/>
            <person name="Zoncu R."/>
        </authorList>
    </citation>
    <scope>FUNCTION</scope>
</reference>
<reference key="26">
    <citation type="journal article" date="2020" name="Nature">
        <title>A substrate-specific mTORC1 pathway underlies Birt-Hogg-Dube syndrome.</title>
        <authorList>
            <person name="Napolitano G."/>
            <person name="Di Malta C."/>
            <person name="Esposito A."/>
            <person name="de Araujo M.E.G."/>
            <person name="Pece S."/>
            <person name="Bertalot G."/>
            <person name="Matarese M."/>
            <person name="Benedetti V."/>
            <person name="Zampelli A."/>
            <person name="Stasyk T."/>
            <person name="Siciliano D."/>
            <person name="Venuta A."/>
            <person name="Cesana M."/>
            <person name="Vilardo C."/>
            <person name="Nusco E."/>
            <person name="Monfregola J."/>
            <person name="Calcagni A."/>
            <person name="Di Fiore P.P."/>
            <person name="Huber L.A."/>
            <person name="Ballabio A."/>
        </authorList>
    </citation>
    <scope>FUNCTION</scope>
    <scope>SUBCELLULAR LOCATION</scope>
    <scope>PHOSPHORYLATION</scope>
</reference>
<reference key="27">
    <citation type="journal article" date="2020" name="Nat. Cell Biol.">
        <title>Mammalian Atg8 proteins and the autophagy factor IRGM control mTOR and TFEB at a regulatory node critical for responses to pathogens.</title>
        <authorList>
            <person name="Kumar S."/>
            <person name="Jain A."/>
            <person name="Choi S.W."/>
            <person name="da Silva G.P.D."/>
            <person name="Allers L."/>
            <person name="Mudd M.H."/>
            <person name="Peters R.S."/>
            <person name="Anonsen J.H."/>
            <person name="Rusten T.E."/>
            <person name="Lazarou M."/>
            <person name="Deretic V."/>
        </authorList>
    </citation>
    <scope>FUNCTION</scope>
    <scope>SUBCELLULAR LOCATION</scope>
    <scope>INTERACTION WITH IRGM</scope>
    <scope>PHOSPHORYLATION AT SER-211</scope>
    <scope>DEPHOSPHORYLATION</scope>
</reference>
<reference key="28">
    <citation type="journal article" date="2021" name="Autophagy">
        <title>Coxsackievirus B3 targets TFEB to disrupt lysosomal function.</title>
        <authorList>
            <person name="Mohamud Y."/>
            <person name="Tang H."/>
            <person name="Xue Y.C."/>
            <person name="Liu H."/>
            <person name="Ng C.S."/>
            <person name="Bahreyni A."/>
            <person name="Luo H."/>
        </authorList>
    </citation>
    <scope>SUBCELLULAR LOCATION</scope>
    <scope>SUBCELLULAR LOCATION (MICROBIAL INFECTION)</scope>
    <scope>PHOSPHORYLATION AT SER-211</scope>
    <scope>PROTEOLYTIC CLEAVAGE (MICROBIAL INFECTION)</scope>
    <scope>MUTAGENESIS OF 60-GLN-SER-61</scope>
</reference>
<reference key="29">
    <citation type="journal article" date="2022" name="Mol. Cell">
        <title>Itaconate is a lysosomal inducer that promotes antibacterial innate immunity.</title>
        <authorList>
            <person name="Zhang Z."/>
            <person name="Chen C."/>
            <person name="Yang F."/>
            <person name="Zeng Y.X."/>
            <person name="Sun P."/>
            <person name="Liu P."/>
            <person name="Li X."/>
        </authorList>
    </citation>
    <scope>FUNCTION</scope>
    <scope>SUBCELLULAR LOCATION</scope>
    <scope>INTERACTION WITH YWHAZ</scope>
    <scope>PHOSPHORYLATION AT SER-211</scope>
    <scope>ALKYLATION AT CYS-212</scope>
    <scope>MUTAGENESIS OF SER-211 AND CYS-212</scope>
</reference>
<reference key="30">
    <citation type="journal article" date="2021" name="Int. J. Mol. Sci.">
        <title>TFEB Overexpression, Not mTOR Inhibition, Ameliorates RagCS75Y Cardiomyopathy.</title>
        <authorList>
            <person name="Kim M."/>
            <person name="Lu L."/>
            <person name="Dvornikov A.V."/>
            <person name="Ma X."/>
            <person name="Ding Y."/>
            <person name="Zhu P."/>
            <person name="Olson T.M."/>
            <person name="Lin X."/>
            <person name="Xu X."/>
        </authorList>
    </citation>
    <scope>INTERACTION WITH RRAGC</scope>
</reference>
<reference key="31">
    <citation type="journal article" date="2023" name="Genet. Med.">
        <title>De novo missense variants in RRAGC lead to a fatal mTORopathy of early childhood.</title>
        <authorList>
            <person name="Reijnders M.R.F."/>
            <person name="Seibt A."/>
            <person name="Brugger M."/>
            <person name="Lamers I.J.C."/>
            <person name="Ott T."/>
            <person name="Klaas O."/>
            <person name="Horvath J."/>
            <person name="Rose A.M.S."/>
            <person name="Craghill I.M."/>
            <person name="Brunet T."/>
            <person name="Graf E."/>
            <person name="Mayerhanser K."/>
            <person name="Hellebrekers D."/>
            <person name="Pauck D."/>
            <person name="Neuen-Jacob E."/>
            <person name="Rodenburg R.J.T."/>
            <person name="Wieczorek D."/>
            <person name="Klee D."/>
            <person name="Mayatepek E."/>
            <person name="Driessen G."/>
            <person name="Bindermann R."/>
            <person name="Averdunk L."/>
            <person name="Lohmeier K."/>
            <person name="Sinnema M."/>
            <person name="Stegmann A.P.A."/>
            <person name="Roepman R."/>
            <person name="Poulter J.A."/>
            <person name="Distelmaier F."/>
        </authorList>
    </citation>
    <scope>SUBCELLULAR LOCATION</scope>
    <scope>INTERACTION WITH RRAGC</scope>
</reference>
<reference key="32">
    <citation type="journal article" date="2023" name="Science">
        <title>Induction of lysosomal and mitochondrial biogenesis by AMPK phosphorylation of FNIP1.</title>
        <authorList>
            <person name="Malik N."/>
            <person name="Ferreira B.I."/>
            <person name="Hollstein P.E."/>
            <person name="Curtis S.D."/>
            <person name="Trefts E."/>
            <person name="Weiser Novak S."/>
            <person name="Yu J."/>
            <person name="Gilson R."/>
            <person name="Hellberg K."/>
            <person name="Fang L."/>
            <person name="Sheridan A."/>
            <person name="Hah N."/>
            <person name="Shadel G.S."/>
            <person name="Manor U."/>
            <person name="Shaw R.J."/>
        </authorList>
    </citation>
    <scope>FUNCTION</scope>
    <scope>SUBCELLULAR LOCATION</scope>
</reference>
<reference evidence="36 37 38" key="33">
    <citation type="journal article" date="2023" name="Nature">
        <title>Structure of the lysosomal mTORC1-TFEB-Rag-Ragulator megacomplex.</title>
        <authorList>
            <person name="Cui Z."/>
            <person name="Napolitano G."/>
            <person name="de Araujo M.E.G."/>
            <person name="Esposito A."/>
            <person name="Monfregola J."/>
            <person name="Huber L.A."/>
            <person name="Ballabio A."/>
            <person name="Hurley J.H."/>
        </authorList>
    </citation>
    <scope>STRUCTURE BY ELECTRON MICROSCOPY (2.90 ANGSTROMS) IN COMPLEX WITH RRAGA; RRAGC; LAMTOR1; LAMTOR2; LAMTOR3; LAMTOR4; LAMTOR5; RPTOR; MLST8 AND MTOR</scope>
    <scope>FUNCTION</scope>
    <scope>PHOSPHORYLATION AT SER-211</scope>
    <scope>MUTAGENESIS OF SER-211 AND 245-ARG--ARG-247</scope>
</reference>
<reference evidence="39" key="34">
    <citation type="journal article" date="2023" name="Proc. Natl. Acad. Sci. U.S.A.">
        <title>A small-molecule drug inhibits autophagy gene expression through the central regulator TFEB.</title>
        <authorList>
            <person name="Lin Y."/>
            <person name="Shi Q."/>
            <person name="Yang G."/>
            <person name="Shi F."/>
            <person name="Zhou Y."/>
            <person name="Wang T."/>
            <person name="Xu P."/>
            <person name="Li P."/>
            <person name="Liu Z."/>
            <person name="Sun H."/>
            <person name="Zhao Z."/>
            <person name="Ding K."/>
            <person name="Wang Z."/>
            <person name="Feng H."/>
            <person name="Yu B."/>
            <person name="Fang P."/>
            <person name="Wang J."/>
        </authorList>
    </citation>
    <scope>X-RAY CRYSTALLOGRAPHY (2.00 ANGSTROMS) OF 248-319 IN COMPLEX WITH ELTROMBOPAG</scope>
    <scope>FUNCTION</scope>
    <scope>ACTIVITY REGULATION</scope>
    <scope>MUTAGENESIS OF 248-ARG--ARG-254; 256-LYS--LYS-264; 271-ARG--LYS-274; ARG-271; 279-LYS--LYS-290 AND 296-ARG--ARG-315</scope>
</reference>
<keyword id="KW-0002">3D-structure</keyword>
<keyword id="KW-0010">Activator</keyword>
<keyword id="KW-1064">Adaptive immunity</keyword>
<keyword id="KW-0025">Alternative splicing</keyword>
<keyword id="KW-0072">Autophagy</keyword>
<keyword id="KW-0963">Cytoplasm</keyword>
<keyword id="KW-0238">DNA-binding</keyword>
<keyword id="KW-0391">Immunity</keyword>
<keyword id="KW-0458">Lysosome</keyword>
<keyword id="KW-0472">Membrane</keyword>
<keyword id="KW-0539">Nucleus</keyword>
<keyword id="KW-0597">Phosphoprotein</keyword>
<keyword id="KW-1267">Proteomics identification</keyword>
<keyword id="KW-1185">Reference proteome</keyword>
<keyword id="KW-0804">Transcription</keyword>
<keyword id="KW-0805">Transcription regulation</keyword>
<keyword id="KW-0832">Ubl conjugation</keyword>
<proteinExistence type="evidence at protein level"/>
<comment type="function">
    <text evidence="1 6 7 8 9 10 11 12 14 16 18 19 20 21 22 23 24 27 28 29 31">Transcription factor that acts as a master regulator of lysosomal biogenesis, autophagy, lysosomal exocytosis, lipid catabolism, energy metabolism and immune response (PubMed:21617040, PubMed:22343943, PubMed:22576015, PubMed:22692423, PubMed:25720963, PubMed:30120233, PubMed:31672913, PubMed:32612235, PubMed:32753672, PubMed:35662396, PubMed:36697823, PubMed:36749723, PubMed:37079666). Specifically recognizes and binds E-box sequences (5'-CANNTG-3'); efficient DNA-binding requires dimerization with itself or with another MiT/TFE family member such as TFE3 or MITF (PubMed:1748288, PubMed:19556463, PubMed:29146937). Involved in the cellular response to amino acid availability by acting downstream of MTOR: in the presence of nutrients, TFEB phosphorylation by MTOR promotes its cytosolic retention and subsequent inactivation (PubMed:21617040, PubMed:22343943, PubMed:22576015, PubMed:22692423, PubMed:25720963, PubMed:32612235, PubMed:32753672, PubMed:35662396, PubMed:36697823). Upon starvation or lysosomal stress, inhibition of MTOR induces TFEB dephosphorylation, resulting in nuclear localization and transcription factor activity (PubMed:22343943, PubMed:22576015, PubMed:22692423, PubMed:25720963, PubMed:32612235, PubMed:32753672, PubMed:35662396, PubMed:36697823). Specifically recognizes and binds the CLEAR-box sequence (5'-GTCACGTGAC-3') present in the regulatory region of many lysosomal genes, leading to activate their expression, thereby playing a central role in expression of lysosomal genes (PubMed:19556463, PubMed:22692423). Regulates lysosomal positioning in response to nutrient deprivation by promoting the expression of PIP4P1 (PubMed:29146937). Acts as a positive regulator of autophagy by promoting expression of genes involved in autophagy (PubMed:21617040, PubMed:22576015, PubMed:23434374, PubMed:27278822). In association with TFE3, activates the expression of CD40L in T-cells, thereby playing a role in T-cell-dependent antibody responses in activated CD4(+) T-cells and thymus-dependent humoral immunity (By similarity). Specifically recognizes the gamma-E3 box, a subset of E-boxes, present in the heavy-chain immunoglobulin enhancer (PubMed:2115126). Plays a role in the signal transduction processes required for normal vascularization of the placenta (By similarity). Involved in the immune response to infection by the bacteria S.aureus, S.typhimurium or S.enterica: infection promotes itaconate production, leading to alkylation, resulting in nuclear localization and transcription factor activity (PubMed:35662396). Itaconate-mediated alkylation activates TFEB-dependent lysosomal biogenesis, facilitating the bacteria clearance during the antibacterial innate immune response (PubMed:35662396). In association with ACSS2, promotes the expression of genes involved in lysosome biogenesis and both autophagy upon glucose deprivation (PubMed:28552616).</text>
</comment>
<comment type="activity regulation">
    <text evidence="29">Inhibited by eltrombopag drug, which binds to the bHLH domain and disrupts DNA-binding.</text>
</comment>
<comment type="subunit">
    <text evidence="5 6 13 19 24 26 27 30">Homodimer and heterodimer; with TFE3 or MITF (PubMed:15507434, PubMed:1748288). Interacts (when phosphorylated by MTOR) with YWHAZ; promoting retention in the cytosol (PubMed:35662396). Interacts with IRGM; promoting association between TFEB and PPP3CB and dephosphorylation (PubMed:32753672). Interacts with small GTPases Rag (RagA/RRAGA, RagB/RRAGB, RagC/RRAGC and/or RagD/RRAGD); promoting its recruitment to lysosomal membrane in the presence of nutrients (PubMed:23401004). Interacts with ACSS2 (PubMed:28552616).</text>
</comment>
<comment type="interaction">
    <interactant intactId="EBI-2814208">
        <id>P19484</id>
    </interactant>
    <interactant intactId="EBI-3910192">
        <id>O75030</id>
        <label>MITF</label>
    </interactant>
    <organismsDiffer>false</organismsDiffer>
    <experiments>3</experiments>
</comment>
<comment type="interaction">
    <interactant intactId="EBI-2814208">
        <id>P19484</id>
    </interactant>
    <interactant intactId="EBI-80140">
        <id>P63165</id>
        <label>SUMO1</label>
    </interactant>
    <organismsDiffer>false</organismsDiffer>
    <experiments>2</experiments>
</comment>
<comment type="interaction">
    <interactant intactId="EBI-2814208">
        <id>P19484</id>
    </interactant>
    <interactant intactId="EBI-356498">
        <id>P62258</id>
        <label>YWHAE</label>
    </interactant>
    <organismsDiffer>false</organismsDiffer>
    <experiments>5</experiments>
</comment>
<comment type="subcellular location">
    <subcellularLocation>
        <location evidence="9 10 11 12 13 14 15 16 17 18 19 21 23 24 25 27 28 31">Nucleus</location>
    </subcellularLocation>
    <subcellularLocation>
        <location evidence="9 11 13 14 16 17 18 21 24 25 27 28 31">Cytoplasm</location>
        <location evidence="9 11 13 14 16 17 18 21 24 25 27 28 31">Cytosol</location>
    </subcellularLocation>
    <subcellularLocation>
        <location evidence="10 12 13 23 28 30">Lysosome membrane</location>
    </subcellularLocation>
    <text evidence="9 10 11 12 13 14 16 17 18 21 23 24 25 27 28 31">Mainly present in the cytoplasm (PubMed:23434374, PubMed:33691586, PubMed:35662396). When nutrients are present, recruited to the lysosomal membrane via association with GDP-bound RagC/RRAGC (or RagD/RRAGD): it is then phosphorylated by MTOR (PubMed:23401004, PubMed:32612235, PubMed:36697823). Phosphorylation by MTOR prevents nuclear translocation and activity by promoting interaction with 14-3-3 proteins, such as YWHAZ (PubMed:22343943, PubMed:22692423, PubMed:23401004, PubMed:25720963, PubMed:32612235, PubMed:32753672, PubMed:35662396, PubMed:36697823, PubMed:37079666). Under aberrant lysosomal storage conditions, it translocates from the cytoplasm to the nucleus (PubMed:21617040, PubMed:22576015, PubMed:23434374, PubMed:25720963, PubMed:32753672). The translocation to the nucleus is regulated by ATP13A2 (PubMed:23434374, PubMed:27278822). Conversely, inhibition of mTORC1, starvation and lysosomal disruption, promotes dephosphorylation and translocation to the nucleus (PubMed:22343943, PubMed:22692423, PubMed:37079666). Exported from the nucleus in response to nutrient availability (PubMed:30120233). In macrophages, translocates into the nucleus upon live S.enterica infection (PubMed:27184844).</text>
</comment>
<comment type="subcellular location">
    <subcellularLocation>
        <location evidence="25">Nucleus</location>
    </subcellularLocation>
    <text evidence="25">(Microbial infection) Following Coxsackievirus B3 infection, full length TFEB and viral protease 3C-mediated cleavage product are translocated from the cytoplasm to the nucleus.</text>
</comment>
<comment type="alternative products">
    <event type="alternative splicing"/>
    <isoform>
        <id>P19484-1</id>
        <name>1</name>
        <sequence type="displayed"/>
    </isoform>
    <isoform>
        <id>P19484-2</id>
        <name>2</name>
        <sequence type="described" ref="VSP_002159"/>
    </isoform>
</comment>
<comment type="domain">
    <text evidence="6">The leucine zipper region is essential for homo- or heterodimerization and high-affinity DNA binding. DNA binding is mediated by the basic region.</text>
</comment>
<comment type="PTM">
    <text evidence="9 10 11 12 13 15 16 21 24 25 27 28">Phosphorylation at Ser-211 by MTOR via non-canonical mTORC1 pathway regulates its subcellular location and activity (PubMed:21617040, PubMed:22343943, PubMed:22576015, PubMed:22692423, PubMed:23401004, PubMed:24081491, PubMed:25720963, PubMed:30120233, PubMed:32612235, PubMed:32753672, PubMed:35662396, PubMed:36697823). When nutrients are present, phosphorylation by MTOR promotes association with 14-3-3/YWHA adapters and retention in the cytosol (PubMed:22343943, PubMed:22576015, PubMed:22692423, PubMed:23401004, PubMed:25720963, PubMed:32612235, PubMed:32753672, PubMed:35662396). Inhibition of mTORC1, starvation and lysosomal disruption, promotes dephosphorylation by calcineurin PPP3CB and translocation to the nucleus (PubMed:22343943, PubMed:22576015, PubMed:22692423, PubMed:25720963, PubMed:32753672). Dephosphorylated by calcineurin PPP3CB in response to lysosomal Ca(2+) release (PubMed:25720963). IRGM promotes dephosphorylation by calcineurin PPP3CB, resulting in TFEB nuclear translocation and stimulation of lysosomal biogenesis (PubMed:32753672). Dephosphorylated by phosphatase PPP3CA following Coxsackievirus B3 infection, leading to nuclear translocation (PubMed:33691586). Exported from the nucleus in a mTORC1-dependent manner in response to nutrient availability (PubMed:30120233).</text>
</comment>
<comment type="PTM">
    <text evidence="27">Alkylated via a non-enzymatic covalent modification (PubMed:35662396). Itaconate, an anti-inflammatory metabolite generated in response to lipopolysaccharide, alkylates Cys-212, preventing association with 14-3-3/YWHA adapters, thereby promoting nuclear translocation and activity (PubMed:35662396).</text>
</comment>
<comment type="PTM">
    <text evidence="5">Sumoylated; does not affect dimerization with MITF.</text>
</comment>
<comment type="PTM">
    <text evidence="25">(Microbial infection) Cleavage by Coxsackievirus B3 protease 3C after site Gln-60. This non-phosphorylated cleavage product retains its ability to interact with TFEB, TFE3 or MITF and presents impaired transcriptional activity, resulting in disruption of lysosomal functions and increased viral infection.</text>
</comment>
<comment type="similarity">
    <text evidence="34">Belongs to the MiT/TFE family.</text>
</comment>
<comment type="sequence caution" evidence="34">
    <conflict type="erroneous initiation">
        <sequence resource="EMBL-CDS" id="AAA36730"/>
    </conflict>
    <text>Extended N-terminus.</text>
</comment>
<comment type="sequence caution" evidence="34">
    <conflict type="erroneous initiation">
        <sequence resource="EMBL-CDS" id="CAE77681"/>
    </conflict>
    <text>Extended N-terminus.</text>
</comment>
<comment type="online information" name="Atlas of Genetics and Cytogenetics in Oncology and Haematology">
    <link uri="https://atlasgeneticsoncology.org/gene/531/TFEB"/>
</comment>
<comment type="online information" name="Protein Spotlight">
    <link uri="https://www.proteinspotlight.org/back_issues/260/"/>
    <text>Clearing the clamour - Issue 260 of July 2023</text>
</comment>
<gene>
    <name evidence="33 35" type="primary">TFEB</name>
    <name type="synonym">BHLHE35</name>
</gene>
<organism>
    <name type="scientific">Homo sapiens</name>
    <name type="common">Human</name>
    <dbReference type="NCBI Taxonomy" id="9606"/>
    <lineage>
        <taxon>Eukaryota</taxon>
        <taxon>Metazoa</taxon>
        <taxon>Chordata</taxon>
        <taxon>Craniata</taxon>
        <taxon>Vertebrata</taxon>
        <taxon>Euteleostomi</taxon>
        <taxon>Mammalia</taxon>
        <taxon>Eutheria</taxon>
        <taxon>Euarchontoglires</taxon>
        <taxon>Primates</taxon>
        <taxon>Haplorrhini</taxon>
        <taxon>Catarrhini</taxon>
        <taxon>Hominidae</taxon>
        <taxon>Homo</taxon>
    </lineage>
</organism>
<evidence type="ECO:0000250" key="1">
    <source>
        <dbReference type="UniProtKB" id="Q9R210"/>
    </source>
</evidence>
<evidence type="ECO:0000255" key="2"/>
<evidence type="ECO:0000255" key="3">
    <source>
        <dbReference type="PROSITE-ProRule" id="PRU00981"/>
    </source>
</evidence>
<evidence type="ECO:0000256" key="4">
    <source>
        <dbReference type="SAM" id="MobiDB-lite"/>
    </source>
</evidence>
<evidence type="ECO:0000269" key="5">
    <source>
    </source>
</evidence>
<evidence type="ECO:0000269" key="6">
    <source>
    </source>
</evidence>
<evidence type="ECO:0000269" key="7">
    <source>
    </source>
</evidence>
<evidence type="ECO:0000269" key="8">
    <source>
    </source>
</evidence>
<evidence type="ECO:0000269" key="9">
    <source>
    </source>
</evidence>
<evidence type="ECO:0000269" key="10">
    <source>
    </source>
</evidence>
<evidence type="ECO:0000269" key="11">
    <source>
    </source>
</evidence>
<evidence type="ECO:0000269" key="12">
    <source>
    </source>
</evidence>
<evidence type="ECO:0000269" key="13">
    <source>
    </source>
</evidence>
<evidence type="ECO:0000269" key="14">
    <source>
    </source>
</evidence>
<evidence type="ECO:0000269" key="15">
    <source>
    </source>
</evidence>
<evidence type="ECO:0000269" key="16">
    <source>
    </source>
</evidence>
<evidence type="ECO:0000269" key="17">
    <source>
    </source>
</evidence>
<evidence type="ECO:0000269" key="18">
    <source>
    </source>
</evidence>
<evidence type="ECO:0000269" key="19">
    <source>
    </source>
</evidence>
<evidence type="ECO:0000269" key="20">
    <source>
    </source>
</evidence>
<evidence type="ECO:0000269" key="21">
    <source>
    </source>
</evidence>
<evidence type="ECO:0000269" key="22">
    <source>
    </source>
</evidence>
<evidence type="ECO:0000269" key="23">
    <source>
    </source>
</evidence>
<evidence type="ECO:0000269" key="24">
    <source>
    </source>
</evidence>
<evidence type="ECO:0000269" key="25">
    <source>
    </source>
</evidence>
<evidence type="ECO:0000269" key="26">
    <source>
    </source>
</evidence>
<evidence type="ECO:0000269" key="27">
    <source>
    </source>
</evidence>
<evidence type="ECO:0000269" key="28">
    <source>
    </source>
</evidence>
<evidence type="ECO:0000269" key="29">
    <source>
    </source>
</evidence>
<evidence type="ECO:0000269" key="30">
    <source>
    </source>
</evidence>
<evidence type="ECO:0000269" key="31">
    <source>
    </source>
</evidence>
<evidence type="ECO:0000303" key="32">
    <source>
    </source>
</evidence>
<evidence type="ECO:0000303" key="33">
    <source>
    </source>
</evidence>
<evidence type="ECO:0000305" key="34"/>
<evidence type="ECO:0000312" key="35">
    <source>
        <dbReference type="HGNC" id="HGNC:11753"/>
    </source>
</evidence>
<evidence type="ECO:0007744" key="36">
    <source>
        <dbReference type="PDB" id="7UX2"/>
    </source>
</evidence>
<evidence type="ECO:0007744" key="37">
    <source>
        <dbReference type="PDB" id="7UXC"/>
    </source>
</evidence>
<evidence type="ECO:0007744" key="38">
    <source>
        <dbReference type="PDB" id="7UXH"/>
    </source>
</evidence>
<evidence type="ECO:0007744" key="39">
    <source>
        <dbReference type="PDB" id="7Y62"/>
    </source>
</evidence>
<evidence type="ECO:0007744" key="40">
    <source>
    </source>
</evidence>
<evidence type="ECO:0007744" key="41">
    <source>
    </source>
</evidence>
<evidence type="ECO:0007744" key="42">
    <source>
    </source>
</evidence>
<evidence type="ECO:0007744" key="43">
    <source>
    </source>
</evidence>
<evidence type="ECO:0007829" key="44">
    <source>
        <dbReference type="PDB" id="7UX2"/>
    </source>
</evidence>
<evidence type="ECO:0007829" key="45">
    <source>
        <dbReference type="PDB" id="7UXC"/>
    </source>
</evidence>
<evidence type="ECO:0007829" key="46">
    <source>
        <dbReference type="PDB" id="7Y62"/>
    </source>
</evidence>